<protein>
    <recommendedName>
        <fullName>Cycloviolacin-H3</fullName>
    </recommendedName>
</protein>
<name>CYH3_VIOHE</name>
<organism>
    <name type="scientific">Viola hederacea</name>
    <name type="common">Australian violet</name>
    <dbReference type="NCBI Taxonomy" id="180952"/>
    <lineage>
        <taxon>Eukaryota</taxon>
        <taxon>Viridiplantae</taxon>
        <taxon>Streptophyta</taxon>
        <taxon>Embryophyta</taxon>
        <taxon>Tracheophyta</taxon>
        <taxon>Spermatophyta</taxon>
        <taxon>Magnoliopsida</taxon>
        <taxon>eudicotyledons</taxon>
        <taxon>Gunneridae</taxon>
        <taxon>Pentapetalae</taxon>
        <taxon>rosids</taxon>
        <taxon>fabids</taxon>
        <taxon>Malpighiales</taxon>
        <taxon>Violaceae</taxon>
        <taxon>Viola</taxon>
        <taxon>Viola subgen. Viola</taxon>
        <taxon>Viola sect. Erpetion</taxon>
    </lineage>
</organism>
<accession>P85232</accession>
<keyword id="KW-0903">Direct protein sequencing</keyword>
<keyword id="KW-1015">Disulfide bond</keyword>
<keyword id="KW-0960">Knottin</keyword>
<keyword id="KW-0611">Plant defense</keyword>
<proteinExistence type="evidence at protein level"/>
<comment type="function">
    <text evidence="4">Probably participates in a plant defense mechanism.</text>
</comment>
<comment type="domain">
    <text evidence="1">The presence of a 'disulfide through disulfide knot' structurally defines this protein as a knottin.</text>
</comment>
<comment type="PTM">
    <text evidence="2 3">This is a cyclic peptide.</text>
</comment>
<comment type="mass spectrometry" mass="3075.28" method="MALDI" evidence="3"/>
<comment type="similarity">
    <text evidence="2">Belongs to the cyclotide family. Moebius subfamily.</text>
</comment>
<comment type="caution">
    <text evidence="4">This peptide is cyclic. The start position was chosen by similarity to OAK1 (kalata-B1) for which the DNA sequence is known.</text>
</comment>
<reference evidence="4" key="1">
    <citation type="journal article" date="2005" name="J. Biol. Chem.">
        <title>Isolation and characterization of novel cyclotides from Viola hederaceae: solution structure and anti-HIV activity of vhl-1, a leaf-specific expressed cyclotide.</title>
        <authorList>
            <person name="Chen B."/>
            <person name="Colgrave M.L."/>
            <person name="Daly N.L."/>
            <person name="Rosengren K.J."/>
            <person name="Gustafson K.R."/>
            <person name="Craik D.J."/>
        </authorList>
    </citation>
    <scope>PROTEIN SEQUENCE</scope>
    <scope>MASS SPECTROMETRY</scope>
    <source>
        <tissue evidence="3">Leaf</tissue>
    </source>
</reference>
<sequence length="30" mass="3102">GLPVCGETCFGGTCNTPGCICDPWPVCTRN</sequence>
<feature type="peptide" id="PRO_0000302127" description="Cycloviolacin-H3" evidence="2 3">
    <location>
        <begin position="1"/>
        <end position="30"/>
    </location>
</feature>
<feature type="disulfide bond" evidence="1 2">
    <location>
        <begin position="5"/>
        <end position="19"/>
    </location>
</feature>
<feature type="disulfide bond" evidence="1 2">
    <location>
        <begin position="9"/>
        <end position="21"/>
    </location>
</feature>
<feature type="disulfide bond" evidence="1 2">
    <location>
        <begin position="14"/>
        <end position="27"/>
    </location>
</feature>
<feature type="cross-link" description="Cyclopeptide (Gly-Asn)" evidence="3">
    <location>
        <begin position="1"/>
        <end position="30"/>
    </location>
</feature>
<evidence type="ECO:0000250" key="1">
    <source>
        <dbReference type="UniProtKB" id="P56254"/>
    </source>
</evidence>
<evidence type="ECO:0000255" key="2">
    <source>
        <dbReference type="PROSITE-ProRule" id="PRU00395"/>
    </source>
</evidence>
<evidence type="ECO:0000269" key="3">
    <source>
    </source>
</evidence>
<evidence type="ECO:0000305" key="4"/>
<dbReference type="SMR" id="P85232"/>
<dbReference type="GO" id="GO:0006952">
    <property type="term" value="P:defense response"/>
    <property type="evidence" value="ECO:0007669"/>
    <property type="project" value="UniProtKB-KW"/>
</dbReference>
<dbReference type="InterPro" id="IPR005535">
    <property type="entry name" value="Cyclotide"/>
</dbReference>
<dbReference type="InterPro" id="IPR012324">
    <property type="entry name" value="Cyclotide_moebius_CS"/>
</dbReference>
<dbReference type="InterPro" id="IPR036146">
    <property type="entry name" value="Cyclotide_sf"/>
</dbReference>
<dbReference type="Pfam" id="PF03784">
    <property type="entry name" value="Cyclotide"/>
    <property type="match status" value="1"/>
</dbReference>
<dbReference type="PIRSF" id="PIRSF037891">
    <property type="entry name" value="Cycloviolacin"/>
    <property type="match status" value="1"/>
</dbReference>
<dbReference type="SUPFAM" id="SSF57038">
    <property type="entry name" value="Cyclotides"/>
    <property type="match status" value="1"/>
</dbReference>
<dbReference type="PROSITE" id="PS51052">
    <property type="entry name" value="CYCLOTIDE"/>
    <property type="match status" value="1"/>
</dbReference>
<dbReference type="PROSITE" id="PS60009">
    <property type="entry name" value="CYCLOTIDE_MOEBIUS"/>
    <property type="match status" value="1"/>
</dbReference>